<sequence>MEVIADRLDDIVKQNIADEKFVDFVIHGLEHQCPAILRPLIRLFIDILLFVIVIYIFTVRLVSRNYQMLLALLALVISLTIFYYFIL</sequence>
<keyword id="KW-0244">Early protein</keyword>
<keyword id="KW-1035">Host cytoplasm</keyword>
<keyword id="KW-1038">Host endoplasmic reticulum</keyword>
<keyword id="KW-1043">Host membrane</keyword>
<keyword id="KW-0472">Membrane</keyword>
<keyword id="KW-1185">Reference proteome</keyword>
<keyword id="KW-0812">Transmembrane</keyword>
<keyword id="KW-1133">Transmembrane helix</keyword>
<keyword id="KW-0946">Virion</keyword>
<proteinExistence type="evidence at transcript level"/>
<organismHost>
    <name type="scientific">Homo sapiens</name>
    <name type="common">Human</name>
    <dbReference type="NCBI Taxonomy" id="9606"/>
</organismHost>
<protein>
    <recommendedName>
        <fullName>Protein OPG096</fullName>
    </recommendedName>
    <alternativeName>
        <fullName>Protein L2</fullName>
    </alternativeName>
</protein>
<organism>
    <name type="scientific">Variola virus (isolate Human/India/Ind3/1967)</name>
    <name type="common">VARV</name>
    <name type="synonym">Smallpox virus</name>
    <dbReference type="NCBI Taxonomy" id="587200"/>
    <lineage>
        <taxon>Viruses</taxon>
        <taxon>Varidnaviria</taxon>
        <taxon>Bamfordvirae</taxon>
        <taxon>Nucleocytoviricota</taxon>
        <taxon>Pokkesviricetes</taxon>
        <taxon>Chitovirales</taxon>
        <taxon>Poxviridae</taxon>
        <taxon>Chordopoxvirinae</taxon>
        <taxon>Orthopoxvirus</taxon>
        <taxon>Variola virus</taxon>
    </lineage>
</organism>
<accession>P0DOM9</accession>
<accession>P33041</accession>
<feature type="chain" id="PRO_0000099619" description="Protein OPG096">
    <location>
        <begin position="1"/>
        <end position="87"/>
    </location>
</feature>
<feature type="transmembrane region" description="Helical" evidence="2">
    <location>
        <begin position="39"/>
        <end position="59"/>
    </location>
</feature>
<feature type="transmembrane region" description="Helical" evidence="2">
    <location>
        <begin position="67"/>
        <end position="87"/>
    </location>
</feature>
<comment type="function">
    <text evidence="1">Early protein involved in virion morphogenesis. Participates in the formation and elongation of crescent-shaped membrane precursors of immature virions in cytoplasmic factories.</text>
</comment>
<comment type="subunit">
    <text evidence="1">Interacts with OPG158.</text>
</comment>
<comment type="subcellular location">
    <subcellularLocation>
        <location evidence="1">Virion membrane</location>
        <topology evidence="1">Multi-pass membrane protein</topology>
    </subcellularLocation>
    <subcellularLocation>
        <location evidence="1">Host cytoplasm</location>
    </subcellularLocation>
    <subcellularLocation>
        <location evidence="1">Host endoplasmic reticulum membrane</location>
    </subcellularLocation>
    <text evidence="1">Localizes in cytoplasmic virus factories.</text>
</comment>
<comment type="induction">
    <text>Expressed in the early phase of the viral replicative cycle.</text>
</comment>
<comment type="similarity">
    <text evidence="3">Belongs to the orthopoxvirus OPG096 family.</text>
</comment>
<evidence type="ECO:0000250" key="1">
    <source>
        <dbReference type="UniProtKB" id="P07613"/>
    </source>
</evidence>
<evidence type="ECO:0000255" key="2"/>
<evidence type="ECO:0000305" key="3"/>
<gene>
    <name type="primary">OPG096</name>
    <name type="ORF">L2R</name>
    <name type="ORF">M2R</name>
</gene>
<name>PG096_VAR67</name>
<reference key="1">
    <citation type="journal article" date="1993" name="Virus Res.">
        <title>Nucleotide sequence analysis of variola virus HindIII M, L, I genome fragments.</title>
        <authorList>
            <person name="Shchelkunov S.N."/>
            <person name="Blinov V.M."/>
            <person name="Totmenin A.V."/>
            <person name="Marennikova S.S."/>
            <person name="Kolykhalov A.A."/>
            <person name="Frolov I.V."/>
            <person name="Chizhikov V.E."/>
            <person name="Gytorov V.V."/>
            <person name="Gashikov P.V."/>
            <person name="Belanov E.F."/>
            <person name="Belavin P.A."/>
            <person name="Resenchuk S.M."/>
            <person name="Andzhaparidze O.G."/>
            <person name="Sandakhchiev L.S."/>
        </authorList>
    </citation>
    <scope>NUCLEOTIDE SEQUENCE [GENOMIC DNA]</scope>
</reference>
<reference key="2">
    <citation type="journal article" date="1993" name="FEBS Lett.">
        <title>Genes of variola and vaccinia viruses necessary to overcome the host protective mechanisms.</title>
        <authorList>
            <person name="Shchelkunov S.N."/>
            <person name="Blinov V.M."/>
            <person name="Sandakhchiev L.S."/>
        </authorList>
    </citation>
    <scope>NUCLEOTIDE SEQUENCE [LARGE SCALE GENOMIC DNA]</scope>
</reference>
<dbReference type="EMBL" id="X67119">
    <property type="protein sequence ID" value="CAA47573.1"/>
    <property type="molecule type" value="Genomic_DNA"/>
</dbReference>
<dbReference type="EMBL" id="S55844">
    <property type="protein sequence ID" value="AAB24670.1"/>
    <property type="molecule type" value="Genomic_DNA"/>
</dbReference>
<dbReference type="EMBL" id="X69198">
    <property type="protein sequence ID" value="CAA49015.1"/>
    <property type="molecule type" value="Genomic_DNA"/>
</dbReference>
<dbReference type="PIR" id="S33088">
    <property type="entry name" value="S33088"/>
</dbReference>
<dbReference type="RefSeq" id="NP_042118.1">
    <property type="nucleotide sequence ID" value="NC_001611.1"/>
</dbReference>
<dbReference type="GeneID" id="1486471"/>
<dbReference type="KEGG" id="vg:1486471"/>
<dbReference type="Proteomes" id="UP000002060">
    <property type="component" value="Segment"/>
</dbReference>
<dbReference type="GO" id="GO:0044167">
    <property type="term" value="C:host cell endoplasmic reticulum membrane"/>
    <property type="evidence" value="ECO:0007669"/>
    <property type="project" value="UniProtKB-SubCell"/>
</dbReference>
<dbReference type="GO" id="GO:0016020">
    <property type="term" value="C:membrane"/>
    <property type="evidence" value="ECO:0007669"/>
    <property type="project" value="UniProtKB-KW"/>
</dbReference>
<dbReference type="GO" id="GO:0055036">
    <property type="term" value="C:virion membrane"/>
    <property type="evidence" value="ECO:0007669"/>
    <property type="project" value="UniProtKB-SubCell"/>
</dbReference>
<dbReference type="InterPro" id="IPR008447">
    <property type="entry name" value="Prot_L2"/>
</dbReference>
<dbReference type="Pfam" id="PF05803">
    <property type="entry name" value="Chordopox_L2"/>
    <property type="match status" value="1"/>
</dbReference>